<evidence type="ECO:0000255" key="1">
    <source>
        <dbReference type="HAMAP-Rule" id="MF_00057"/>
    </source>
</evidence>
<dbReference type="EC" id="2.7.7.38" evidence="1"/>
<dbReference type="EMBL" id="CP001010">
    <property type="protein sequence ID" value="ACB43603.1"/>
    <property type="molecule type" value="Genomic_DNA"/>
</dbReference>
<dbReference type="SMR" id="B1XTC6"/>
<dbReference type="STRING" id="452638.Pnec_0310"/>
<dbReference type="KEGG" id="pne:Pnec_0310"/>
<dbReference type="eggNOG" id="COG1212">
    <property type="taxonomic scope" value="Bacteria"/>
</dbReference>
<dbReference type="HOGENOM" id="CLU_065038_1_0_4"/>
<dbReference type="OrthoDB" id="9815559at2"/>
<dbReference type="UniPathway" id="UPA00030"/>
<dbReference type="UniPathway" id="UPA00358">
    <property type="reaction ID" value="UER00476"/>
</dbReference>
<dbReference type="GO" id="GO:0005829">
    <property type="term" value="C:cytosol"/>
    <property type="evidence" value="ECO:0007669"/>
    <property type="project" value="TreeGrafter"/>
</dbReference>
<dbReference type="GO" id="GO:0008690">
    <property type="term" value="F:3-deoxy-manno-octulosonate cytidylyltransferase activity"/>
    <property type="evidence" value="ECO:0007669"/>
    <property type="project" value="UniProtKB-UniRule"/>
</dbReference>
<dbReference type="GO" id="GO:0033468">
    <property type="term" value="P:CMP-keto-3-deoxy-D-manno-octulosonic acid biosynthetic process"/>
    <property type="evidence" value="ECO:0007669"/>
    <property type="project" value="UniProtKB-UniRule"/>
</dbReference>
<dbReference type="GO" id="GO:0009103">
    <property type="term" value="P:lipopolysaccharide biosynthetic process"/>
    <property type="evidence" value="ECO:0007669"/>
    <property type="project" value="UniProtKB-UniRule"/>
</dbReference>
<dbReference type="CDD" id="cd02517">
    <property type="entry name" value="CMP-KDO-Synthetase"/>
    <property type="match status" value="1"/>
</dbReference>
<dbReference type="FunFam" id="3.90.550.10:FF:000011">
    <property type="entry name" value="3-deoxy-manno-octulosonate cytidylyltransferase"/>
    <property type="match status" value="1"/>
</dbReference>
<dbReference type="Gene3D" id="3.90.550.10">
    <property type="entry name" value="Spore Coat Polysaccharide Biosynthesis Protein SpsA, Chain A"/>
    <property type="match status" value="1"/>
</dbReference>
<dbReference type="HAMAP" id="MF_00057">
    <property type="entry name" value="KdsB"/>
    <property type="match status" value="1"/>
</dbReference>
<dbReference type="InterPro" id="IPR003329">
    <property type="entry name" value="Cytidylyl_trans"/>
</dbReference>
<dbReference type="InterPro" id="IPR004528">
    <property type="entry name" value="KdsB"/>
</dbReference>
<dbReference type="InterPro" id="IPR029044">
    <property type="entry name" value="Nucleotide-diphossugar_trans"/>
</dbReference>
<dbReference type="NCBIfam" id="TIGR00466">
    <property type="entry name" value="kdsB"/>
    <property type="match status" value="1"/>
</dbReference>
<dbReference type="NCBIfam" id="NF003952">
    <property type="entry name" value="PRK05450.1-5"/>
    <property type="match status" value="1"/>
</dbReference>
<dbReference type="NCBIfam" id="NF009905">
    <property type="entry name" value="PRK13368.1"/>
    <property type="match status" value="1"/>
</dbReference>
<dbReference type="PANTHER" id="PTHR42866">
    <property type="entry name" value="3-DEOXY-MANNO-OCTULOSONATE CYTIDYLYLTRANSFERASE"/>
    <property type="match status" value="1"/>
</dbReference>
<dbReference type="PANTHER" id="PTHR42866:SF2">
    <property type="entry name" value="3-DEOXY-MANNO-OCTULOSONATE CYTIDYLYLTRANSFERASE, MITOCHONDRIAL"/>
    <property type="match status" value="1"/>
</dbReference>
<dbReference type="Pfam" id="PF02348">
    <property type="entry name" value="CTP_transf_3"/>
    <property type="match status" value="1"/>
</dbReference>
<dbReference type="SUPFAM" id="SSF53448">
    <property type="entry name" value="Nucleotide-diphospho-sugar transferases"/>
    <property type="match status" value="1"/>
</dbReference>
<organism>
    <name type="scientific">Polynucleobacter necessarius subsp. necessarius (strain STIR1)</name>
    <dbReference type="NCBI Taxonomy" id="452638"/>
    <lineage>
        <taxon>Bacteria</taxon>
        <taxon>Pseudomonadati</taxon>
        <taxon>Pseudomonadota</taxon>
        <taxon>Betaproteobacteria</taxon>
        <taxon>Burkholderiales</taxon>
        <taxon>Burkholderiaceae</taxon>
        <taxon>Polynucleobacter</taxon>
    </lineage>
</organism>
<reference key="1">
    <citation type="journal article" date="2013" name="Proc. Natl. Acad. Sci. U.S.A.">
        <title>Polynucleobacter necessarius, a model for genome reduction in both free-living and symbiotic bacteria.</title>
        <authorList>
            <person name="Boscaro V."/>
            <person name="Felletti M."/>
            <person name="Vannini C."/>
            <person name="Ackerman M.S."/>
            <person name="Chain P.S."/>
            <person name="Malfatti S."/>
            <person name="Vergez L.M."/>
            <person name="Shin M."/>
            <person name="Doak T.G."/>
            <person name="Lynch M."/>
            <person name="Petroni G."/>
        </authorList>
    </citation>
    <scope>NUCLEOTIDE SEQUENCE [LARGE SCALE GENOMIC DNA]</scope>
    <source>
        <strain>STIR1</strain>
    </source>
</reference>
<proteinExistence type="inferred from homology"/>
<comment type="function">
    <text evidence="1">Activates KDO (a required 8-carbon sugar) for incorporation into bacterial lipopolysaccharide in Gram-negative bacteria.</text>
</comment>
<comment type="catalytic activity">
    <reaction evidence="1">
        <text>3-deoxy-alpha-D-manno-oct-2-ulosonate + CTP = CMP-3-deoxy-beta-D-manno-octulosonate + diphosphate</text>
        <dbReference type="Rhea" id="RHEA:23448"/>
        <dbReference type="ChEBI" id="CHEBI:33019"/>
        <dbReference type="ChEBI" id="CHEBI:37563"/>
        <dbReference type="ChEBI" id="CHEBI:85986"/>
        <dbReference type="ChEBI" id="CHEBI:85987"/>
        <dbReference type="EC" id="2.7.7.38"/>
    </reaction>
</comment>
<comment type="pathway">
    <text evidence="1">Nucleotide-sugar biosynthesis; CMP-3-deoxy-D-manno-octulosonate biosynthesis; CMP-3-deoxy-D-manno-octulosonate from 3-deoxy-D-manno-octulosonate and CTP: step 1/1.</text>
</comment>
<comment type="pathway">
    <text evidence="1">Bacterial outer membrane biogenesis; lipopolysaccharide biosynthesis.</text>
</comment>
<comment type="subcellular location">
    <subcellularLocation>
        <location evidence="1">Cytoplasm</location>
    </subcellularLocation>
</comment>
<comment type="similarity">
    <text evidence="1">Belongs to the KdsB family.</text>
</comment>
<gene>
    <name evidence="1" type="primary">kdsB</name>
    <name type="ordered locus">Pnec_0310</name>
</gene>
<feature type="chain" id="PRO_0000370116" description="3-deoxy-manno-octulosonate cytidylyltransferase">
    <location>
        <begin position="1"/>
        <end position="254"/>
    </location>
</feature>
<accession>B1XTC6</accession>
<name>KDSB_POLNS</name>
<protein>
    <recommendedName>
        <fullName evidence="1">3-deoxy-manno-octulosonate cytidylyltransferase</fullName>
        <ecNumber evidence="1">2.7.7.38</ecNumber>
    </recommendedName>
    <alternativeName>
        <fullName evidence="1">CMP-2-keto-3-deoxyoctulosonic acid synthase</fullName>
        <shortName evidence="1">CKS</shortName>
        <shortName evidence="1">CMP-KDO synthase</shortName>
    </alternativeName>
</protein>
<keyword id="KW-0963">Cytoplasm</keyword>
<keyword id="KW-0448">Lipopolysaccharide biosynthesis</keyword>
<keyword id="KW-0548">Nucleotidyltransferase</keyword>
<keyword id="KW-0808">Transferase</keyword>
<sequence>MNADSKAPDFLVVIPARLGSTRLPRKPLADIGGKPMVIRVAERAKQSLAHSVVVATDSPEIQAACDEHRIECLLTSENHPTGTDRIAEVAQLLKLPANALVVNVQGDEPLIPPKLINQVARTLAEHEQCVISTVAVPITDAAEINNPNVVKVVLNRSGEALYFSRAPIPFVRDPQSSQKTMHLRHLGIYAYRADFLQAYTRLEPASPEQAEALEQLRALWNGYRIAVHTAPEAPPAGVDTPEDLERVRQLLARS</sequence>